<proteinExistence type="inferred from homology"/>
<evidence type="ECO:0000250" key="1"/>
<evidence type="ECO:0000255" key="2"/>
<evidence type="ECO:0000305" key="3"/>
<keyword id="KW-0031">Aminopeptidase</keyword>
<keyword id="KW-0378">Hydrolase</keyword>
<keyword id="KW-0479">Metal-binding</keyword>
<keyword id="KW-0482">Metalloprotease</keyword>
<keyword id="KW-0645">Protease</keyword>
<keyword id="KW-1185">Reference proteome</keyword>
<keyword id="KW-0862">Zinc</keyword>
<comment type="cofactor">
    <cofactor evidence="1">
        <name>Zn(2+)</name>
        <dbReference type="ChEBI" id="CHEBI:29105"/>
    </cofactor>
</comment>
<comment type="similarity">
    <text evidence="3">Belongs to the peptidase M18 family.</text>
</comment>
<reference key="1">
    <citation type="journal article" date="2003" name="Proc. Natl. Acad. Sci. U.S.A.">
        <title>The complete genome sequence of Mycobacterium bovis.</title>
        <authorList>
            <person name="Garnier T."/>
            <person name="Eiglmeier K."/>
            <person name="Camus J.-C."/>
            <person name="Medina N."/>
            <person name="Mansoor H."/>
            <person name="Pryor M."/>
            <person name="Duthoy S."/>
            <person name="Grondin S."/>
            <person name="Lacroix C."/>
            <person name="Monsempe C."/>
            <person name="Simon S."/>
            <person name="Harris B."/>
            <person name="Atkin R."/>
            <person name="Doggett J."/>
            <person name="Mayes R."/>
            <person name="Keating L."/>
            <person name="Wheeler P.R."/>
            <person name="Parkhill J."/>
            <person name="Barrell B.G."/>
            <person name="Cole S.T."/>
            <person name="Gordon S.V."/>
            <person name="Hewinson R.G."/>
        </authorList>
    </citation>
    <scope>NUCLEOTIDE SEQUENCE [LARGE SCALE GENOMIC DNA]</scope>
    <source>
        <strain>ATCC BAA-935 / AF2122/97</strain>
    </source>
</reference>
<reference key="2">
    <citation type="journal article" date="2017" name="Genome Announc.">
        <title>Updated reference genome sequence and annotation of Mycobacterium bovis AF2122/97.</title>
        <authorList>
            <person name="Malone K.M."/>
            <person name="Farrell D."/>
            <person name="Stuber T.P."/>
            <person name="Schubert O.T."/>
            <person name="Aebersold R."/>
            <person name="Robbe-Austerman S."/>
            <person name="Gordon S.V."/>
        </authorList>
    </citation>
    <scope>NUCLEOTIDE SEQUENCE [LARGE SCALE GENOMIC DNA]</scope>
    <scope>GENOME REANNOTATION</scope>
    <source>
        <strain>ATCC BAA-935 / AF2122/97</strain>
    </source>
</reference>
<organism>
    <name type="scientific">Mycobacterium bovis (strain ATCC BAA-935 / AF2122/97)</name>
    <dbReference type="NCBI Taxonomy" id="233413"/>
    <lineage>
        <taxon>Bacteria</taxon>
        <taxon>Bacillati</taxon>
        <taxon>Actinomycetota</taxon>
        <taxon>Actinomycetes</taxon>
        <taxon>Mycobacteriales</taxon>
        <taxon>Mycobacteriaceae</taxon>
        <taxon>Mycobacterium</taxon>
        <taxon>Mycobacterium tuberculosis complex</taxon>
    </lineage>
</organism>
<accession>P59951</accession>
<accession>A0A1R3XYK0</accession>
<accession>X2BG29</accession>
<sequence>MAATAHGLCEFIDASPSPFHVCATVAGRLLGAGYRELREADRWPDKPGRYFTVRAGSLVAWNAEQSGHTQVPFRIVGAHTDSPNLRVKQHPDRLVAGWHVVALQPYGGVWLHSWLDRDLGISGRLSVRDGTGVSHRLVRIDDPILRVPQLAIHLAEDRKSLTLDPQRHINAVWGVGERVESFVGYVAQRAGVAAADVLAADLMTHDLTPSALIGASVNGTASLLSAPRLDNQASCYAGMEALLAVDVDSASSGFVPVLAIFDHEEVGSASGHGAQSDLLSSVLERIVLAAGGTREDFLRRLTTSMLASADMAHATHPNYPDRHEPSHPIEVNAGPVLKVHPNLRYATDGRTAAAFALACQRAGVPMQRYEHRADLPCGSTIGPLAAARTGIPTVDVGAAQLAMHSARELMGAHDVAAYSAALQAFLSAELSEA</sequence>
<feature type="chain" id="PRO_0000173462" description="Probable M18 family aminopeptidase 2">
    <location>
        <begin position="1"/>
        <end position="433"/>
    </location>
</feature>
<feature type="binding site" evidence="2">
    <location>
        <position position="79"/>
    </location>
    <ligand>
        <name>Zn(2+)</name>
        <dbReference type="ChEBI" id="CHEBI:29105"/>
    </ligand>
</feature>
<feature type="binding site" evidence="2">
    <location>
        <position position="153"/>
    </location>
    <ligand>
        <name>Zn(2+)</name>
        <dbReference type="ChEBI" id="CHEBI:29105"/>
    </ligand>
</feature>
<feature type="binding site" evidence="2">
    <location>
        <position position="404"/>
    </location>
    <ligand>
        <name>Zn(2+)</name>
        <dbReference type="ChEBI" id="CHEBI:29105"/>
    </ligand>
</feature>
<name>APEB_MYCBO</name>
<protein>
    <recommendedName>
        <fullName>Probable M18 family aminopeptidase 2</fullName>
        <ecNumber>3.4.11.-</ecNumber>
    </recommendedName>
</protein>
<gene>
    <name type="primary">apeB</name>
    <name type="synonym">pepC</name>
    <name type="ordered locus">BQ2027_MB0823</name>
</gene>
<dbReference type="EC" id="3.4.11.-"/>
<dbReference type="EMBL" id="LT708304">
    <property type="protein sequence ID" value="SIT99422.1"/>
    <property type="molecule type" value="Genomic_DNA"/>
</dbReference>
<dbReference type="RefSeq" id="NP_854481.1">
    <property type="nucleotide sequence ID" value="NC_002945.3"/>
</dbReference>
<dbReference type="RefSeq" id="WP_003404103.1">
    <property type="nucleotide sequence ID" value="NC_002945.4"/>
</dbReference>
<dbReference type="SMR" id="P59951"/>
<dbReference type="KEGG" id="mbo:BQ2027_MB0823"/>
<dbReference type="PATRIC" id="fig|233413.5.peg.895"/>
<dbReference type="Proteomes" id="UP000001419">
    <property type="component" value="Chromosome"/>
</dbReference>
<dbReference type="GO" id="GO:0005737">
    <property type="term" value="C:cytoplasm"/>
    <property type="evidence" value="ECO:0007669"/>
    <property type="project" value="UniProtKB-ARBA"/>
</dbReference>
<dbReference type="GO" id="GO:0004177">
    <property type="term" value="F:aminopeptidase activity"/>
    <property type="evidence" value="ECO:0007669"/>
    <property type="project" value="UniProtKB-UniRule"/>
</dbReference>
<dbReference type="GO" id="GO:0008237">
    <property type="term" value="F:metallopeptidase activity"/>
    <property type="evidence" value="ECO:0007669"/>
    <property type="project" value="UniProtKB-UniRule"/>
</dbReference>
<dbReference type="GO" id="GO:0008270">
    <property type="term" value="F:zinc ion binding"/>
    <property type="evidence" value="ECO:0007669"/>
    <property type="project" value="UniProtKB-UniRule"/>
</dbReference>
<dbReference type="GO" id="GO:0006508">
    <property type="term" value="P:proteolysis"/>
    <property type="evidence" value="ECO:0007669"/>
    <property type="project" value="UniProtKB-UniRule"/>
</dbReference>
<dbReference type="CDD" id="cd05658">
    <property type="entry name" value="M18_DAP"/>
    <property type="match status" value="1"/>
</dbReference>
<dbReference type="FunFam" id="2.30.250.10:FF:000004">
    <property type="entry name" value="Probable M18 family aminopeptidase 2"/>
    <property type="match status" value="1"/>
</dbReference>
<dbReference type="Gene3D" id="2.30.250.10">
    <property type="entry name" value="Aminopeptidase i, Domain 2"/>
    <property type="match status" value="1"/>
</dbReference>
<dbReference type="Gene3D" id="3.40.630.10">
    <property type="entry name" value="Zn peptidases"/>
    <property type="match status" value="1"/>
</dbReference>
<dbReference type="HAMAP" id="MF_00467">
    <property type="entry name" value="Aminopeptidase_M18_2"/>
    <property type="match status" value="1"/>
</dbReference>
<dbReference type="InterPro" id="IPR022984">
    <property type="entry name" value="M18_aminopeptidase_2"/>
</dbReference>
<dbReference type="InterPro" id="IPR001948">
    <property type="entry name" value="Peptidase_M18"/>
</dbReference>
<dbReference type="InterPro" id="IPR023358">
    <property type="entry name" value="Peptidase_M18_dom2"/>
</dbReference>
<dbReference type="NCBIfam" id="NF002759">
    <property type="entry name" value="PRK02813.1"/>
    <property type="match status" value="1"/>
</dbReference>
<dbReference type="PANTHER" id="PTHR28570">
    <property type="entry name" value="ASPARTYL AMINOPEPTIDASE"/>
    <property type="match status" value="1"/>
</dbReference>
<dbReference type="PANTHER" id="PTHR28570:SF3">
    <property type="entry name" value="ASPARTYL AMINOPEPTIDASE"/>
    <property type="match status" value="1"/>
</dbReference>
<dbReference type="Pfam" id="PF02127">
    <property type="entry name" value="Peptidase_M18"/>
    <property type="match status" value="1"/>
</dbReference>
<dbReference type="PRINTS" id="PR00932">
    <property type="entry name" value="AMINO1PTASE"/>
</dbReference>
<dbReference type="SUPFAM" id="SSF101821">
    <property type="entry name" value="Aminopeptidase/glucanase lid domain"/>
    <property type="match status" value="1"/>
</dbReference>
<dbReference type="SUPFAM" id="SSF53187">
    <property type="entry name" value="Zn-dependent exopeptidases"/>
    <property type="match status" value="1"/>
</dbReference>